<comment type="subcellular location">
    <subcellularLocation>
        <location evidence="1">Cytoplasm</location>
    </subcellularLocation>
</comment>
<comment type="similarity">
    <text evidence="1">Belongs to the UPF0298 family.</text>
</comment>
<reference key="1">
    <citation type="journal article" date="2006" name="Proc. Natl. Acad. Sci. U.S.A.">
        <title>Molecular genetic anatomy of inter- and intraserotype variation in the human bacterial pathogen group A Streptococcus.</title>
        <authorList>
            <person name="Beres S.B."/>
            <person name="Richter E.W."/>
            <person name="Nagiec M.J."/>
            <person name="Sumby P."/>
            <person name="Porcella S.F."/>
            <person name="DeLeo F.R."/>
            <person name="Musser J.M."/>
        </authorList>
    </citation>
    <scope>NUCLEOTIDE SEQUENCE [LARGE SCALE GENOMIC DNA]</scope>
    <source>
        <strain>MGAS10270</strain>
    </source>
</reference>
<sequence length="91" mass="11103">MFQKQERIGLVVYLYYNRDARKLSKFGDLYYHSKRSRYLIIYINKNDLDTKLEEMRRLKCVKDIRPSAFDDIDRQFVGNLHRDETNNHQKG</sequence>
<keyword id="KW-0963">Cytoplasm</keyword>
<protein>
    <recommendedName>
        <fullName evidence="1">UPF0298 protein MGAS10270_Spy0325</fullName>
    </recommendedName>
</protein>
<accession>Q1JID3</accession>
<evidence type="ECO:0000255" key="1">
    <source>
        <dbReference type="HAMAP-Rule" id="MF_01126"/>
    </source>
</evidence>
<name>Y325_STRPD</name>
<gene>
    <name type="ordered locus">MGAS10270_Spy0325</name>
</gene>
<dbReference type="EMBL" id="CP000260">
    <property type="protein sequence ID" value="ABF33390.1"/>
    <property type="molecule type" value="Genomic_DNA"/>
</dbReference>
<dbReference type="RefSeq" id="WP_002985847.1">
    <property type="nucleotide sequence ID" value="NZ_CVUH01000002.1"/>
</dbReference>
<dbReference type="SMR" id="Q1JID3"/>
<dbReference type="KEGG" id="sph:MGAS10270_Spy0325"/>
<dbReference type="HOGENOM" id="CLU_159890_1_0_9"/>
<dbReference type="Proteomes" id="UP000002436">
    <property type="component" value="Chromosome"/>
</dbReference>
<dbReference type="GO" id="GO:0005737">
    <property type="term" value="C:cytoplasm"/>
    <property type="evidence" value="ECO:0007669"/>
    <property type="project" value="UniProtKB-SubCell"/>
</dbReference>
<dbReference type="HAMAP" id="MF_01126">
    <property type="entry name" value="UPF0298"/>
    <property type="match status" value="1"/>
</dbReference>
<dbReference type="InterPro" id="IPR016979">
    <property type="entry name" value="DUF2129"/>
</dbReference>
<dbReference type="NCBIfam" id="NF002631">
    <property type="entry name" value="PRK02302.1"/>
    <property type="match status" value="1"/>
</dbReference>
<dbReference type="Pfam" id="PF09902">
    <property type="entry name" value="DUF2129"/>
    <property type="match status" value="1"/>
</dbReference>
<dbReference type="PIRSF" id="PIRSF031653">
    <property type="entry name" value="UCP031653"/>
    <property type="match status" value="1"/>
</dbReference>
<feature type="chain" id="PRO_1000065370" description="UPF0298 protein MGAS10270_Spy0325">
    <location>
        <begin position="1"/>
        <end position="91"/>
    </location>
</feature>
<proteinExistence type="inferred from homology"/>
<organism>
    <name type="scientific">Streptococcus pyogenes serotype M2 (strain MGAS10270)</name>
    <dbReference type="NCBI Taxonomy" id="370552"/>
    <lineage>
        <taxon>Bacteria</taxon>
        <taxon>Bacillati</taxon>
        <taxon>Bacillota</taxon>
        <taxon>Bacilli</taxon>
        <taxon>Lactobacillales</taxon>
        <taxon>Streptococcaceae</taxon>
        <taxon>Streptococcus</taxon>
    </lineage>
</organism>